<protein>
    <recommendedName>
        <fullName evidence="1">Argininosuccinate synthase</fullName>
        <ecNumber evidence="1">6.3.4.5</ecNumber>
    </recommendedName>
    <alternativeName>
        <fullName evidence="1">Citrulline--aspartate ligase</fullName>
    </alternativeName>
</protein>
<sequence>MTTILKHLPVGQRIGIAFSGGLDTSAALLWMRQKGAVPYAYTANLGQPDEEDYDAIPRRAMEYGAENARLIDCRKQLVAEGIAAIQCGAFHNTTGGLTYFNTTPLGRAVTGTMLVAAMKEDGVNIWGDGSTYKGNDIERFYRYGLLTNAELQIYKPWLDTDFIDELGGRHEMSEFMIACGFDYKMSVEKAYSTDSNMLGATHEAKDLEYLNSSVKIVNPIMGVKFWDESVKIPAEEVTVRFEQGHPVALNGKTFSDDVEMMLEANRIGGRHGLGMSDQIENRIIEAKSRGIYEAPGMALLHIAYERLLTGIHNEDTIEQYHAHGRQLGRLLYQGRWFDSQALMLRDSLQRWVASQITGEVTLELRRGNDYSILNTVSENLTYKPERLTMEKGDSVFSPDDRIGQLTMRNLDITDTREKLFGYAKTGLLSSSAASGVPQVENLENKGQ</sequence>
<accession>Q0TCT8</accession>
<gene>
    <name evidence="1" type="primary">argG</name>
    <name type="ordered locus">ECP_3259</name>
</gene>
<dbReference type="EC" id="6.3.4.5" evidence="1"/>
<dbReference type="EMBL" id="CP000247">
    <property type="protein sequence ID" value="ABG71241.1"/>
    <property type="molecule type" value="Genomic_DNA"/>
</dbReference>
<dbReference type="RefSeq" id="WP_000207680.1">
    <property type="nucleotide sequence ID" value="NC_008253.1"/>
</dbReference>
<dbReference type="SMR" id="Q0TCT8"/>
<dbReference type="KEGG" id="ecp:ECP_3259"/>
<dbReference type="HOGENOM" id="CLU_032784_4_1_6"/>
<dbReference type="UniPathway" id="UPA00068">
    <property type="reaction ID" value="UER00113"/>
</dbReference>
<dbReference type="Proteomes" id="UP000009182">
    <property type="component" value="Chromosome"/>
</dbReference>
<dbReference type="GO" id="GO:0005737">
    <property type="term" value="C:cytoplasm"/>
    <property type="evidence" value="ECO:0007669"/>
    <property type="project" value="UniProtKB-SubCell"/>
</dbReference>
<dbReference type="GO" id="GO:0004055">
    <property type="term" value="F:argininosuccinate synthase activity"/>
    <property type="evidence" value="ECO:0007669"/>
    <property type="project" value="UniProtKB-UniRule"/>
</dbReference>
<dbReference type="GO" id="GO:0005524">
    <property type="term" value="F:ATP binding"/>
    <property type="evidence" value="ECO:0007669"/>
    <property type="project" value="UniProtKB-UniRule"/>
</dbReference>
<dbReference type="GO" id="GO:0042803">
    <property type="term" value="F:protein homodimerization activity"/>
    <property type="evidence" value="ECO:0007669"/>
    <property type="project" value="InterPro"/>
</dbReference>
<dbReference type="GO" id="GO:0000053">
    <property type="term" value="P:argininosuccinate metabolic process"/>
    <property type="evidence" value="ECO:0007669"/>
    <property type="project" value="TreeGrafter"/>
</dbReference>
<dbReference type="GO" id="GO:0006526">
    <property type="term" value="P:L-arginine biosynthetic process"/>
    <property type="evidence" value="ECO:0007669"/>
    <property type="project" value="UniProtKB-UniRule"/>
</dbReference>
<dbReference type="GO" id="GO:0000050">
    <property type="term" value="P:urea cycle"/>
    <property type="evidence" value="ECO:0007669"/>
    <property type="project" value="TreeGrafter"/>
</dbReference>
<dbReference type="CDD" id="cd01999">
    <property type="entry name" value="ASS"/>
    <property type="match status" value="1"/>
</dbReference>
<dbReference type="FunFam" id="1.10.287.400:FF:000001">
    <property type="entry name" value="Argininosuccinate synthase"/>
    <property type="match status" value="1"/>
</dbReference>
<dbReference type="Gene3D" id="1.10.287.400">
    <property type="match status" value="1"/>
</dbReference>
<dbReference type="Gene3D" id="3.90.1260.10">
    <property type="entry name" value="Argininosuccinate synthetase, chain A, domain 2"/>
    <property type="match status" value="1"/>
</dbReference>
<dbReference type="Gene3D" id="3.40.50.620">
    <property type="entry name" value="HUPs"/>
    <property type="match status" value="1"/>
</dbReference>
<dbReference type="HAMAP" id="MF_00581">
    <property type="entry name" value="Arg_succ_synth_type2"/>
    <property type="match status" value="1"/>
</dbReference>
<dbReference type="InterPro" id="IPR023437">
    <property type="entry name" value="Arg_succ_synth_type2_subfam"/>
</dbReference>
<dbReference type="InterPro" id="IPR048268">
    <property type="entry name" value="Arginosuc_syn_C"/>
</dbReference>
<dbReference type="InterPro" id="IPR048267">
    <property type="entry name" value="Arginosuc_syn_N"/>
</dbReference>
<dbReference type="InterPro" id="IPR001518">
    <property type="entry name" value="Arginosuc_synth"/>
</dbReference>
<dbReference type="InterPro" id="IPR018223">
    <property type="entry name" value="Arginosuc_synth_CS"/>
</dbReference>
<dbReference type="InterPro" id="IPR023434">
    <property type="entry name" value="Arginosuc_synth_type_1_subfam"/>
</dbReference>
<dbReference type="InterPro" id="IPR024074">
    <property type="entry name" value="AS_cat/multimer_dom_body"/>
</dbReference>
<dbReference type="InterPro" id="IPR024073">
    <property type="entry name" value="AS_multimer_C_tail"/>
</dbReference>
<dbReference type="InterPro" id="IPR014729">
    <property type="entry name" value="Rossmann-like_a/b/a_fold"/>
</dbReference>
<dbReference type="NCBIfam" id="TIGR00032">
    <property type="entry name" value="argG"/>
    <property type="match status" value="1"/>
</dbReference>
<dbReference type="NCBIfam" id="NF003779">
    <property type="entry name" value="PRK05370.1"/>
    <property type="match status" value="1"/>
</dbReference>
<dbReference type="PANTHER" id="PTHR11587">
    <property type="entry name" value="ARGININOSUCCINATE SYNTHASE"/>
    <property type="match status" value="1"/>
</dbReference>
<dbReference type="PANTHER" id="PTHR11587:SF2">
    <property type="entry name" value="ARGININOSUCCINATE SYNTHASE"/>
    <property type="match status" value="1"/>
</dbReference>
<dbReference type="Pfam" id="PF20979">
    <property type="entry name" value="Arginosuc_syn_C"/>
    <property type="match status" value="1"/>
</dbReference>
<dbReference type="Pfam" id="PF00764">
    <property type="entry name" value="Arginosuc_synth"/>
    <property type="match status" value="1"/>
</dbReference>
<dbReference type="SUPFAM" id="SSF52402">
    <property type="entry name" value="Adenine nucleotide alpha hydrolases-like"/>
    <property type="match status" value="1"/>
</dbReference>
<dbReference type="SUPFAM" id="SSF69864">
    <property type="entry name" value="Argininosuccinate synthetase, C-terminal domain"/>
    <property type="match status" value="1"/>
</dbReference>
<dbReference type="PROSITE" id="PS00564">
    <property type="entry name" value="ARGININOSUCCIN_SYN_1"/>
    <property type="match status" value="1"/>
</dbReference>
<dbReference type="PROSITE" id="PS00565">
    <property type="entry name" value="ARGININOSUCCIN_SYN_2"/>
    <property type="match status" value="1"/>
</dbReference>
<name>ASSY_ECOL5</name>
<keyword id="KW-0028">Amino-acid biosynthesis</keyword>
<keyword id="KW-0055">Arginine biosynthesis</keyword>
<keyword id="KW-0067">ATP-binding</keyword>
<keyword id="KW-0963">Cytoplasm</keyword>
<keyword id="KW-0436">Ligase</keyword>
<keyword id="KW-0547">Nucleotide-binding</keyword>
<feature type="chain" id="PRO_1000025422" description="Argininosuccinate synthase">
    <location>
        <begin position="1"/>
        <end position="447"/>
    </location>
</feature>
<feature type="binding site" evidence="1">
    <location>
        <begin position="17"/>
        <end position="25"/>
    </location>
    <ligand>
        <name>ATP</name>
        <dbReference type="ChEBI" id="CHEBI:30616"/>
    </ligand>
</feature>
<feature type="binding site" evidence="1">
    <location>
        <position position="43"/>
    </location>
    <ligand>
        <name>ATP</name>
        <dbReference type="ChEBI" id="CHEBI:30616"/>
    </ligand>
</feature>
<feature type="binding site" evidence="1">
    <location>
        <position position="99"/>
    </location>
    <ligand>
        <name>L-citrulline</name>
        <dbReference type="ChEBI" id="CHEBI:57743"/>
    </ligand>
</feature>
<feature type="binding site" evidence="1">
    <location>
        <position position="129"/>
    </location>
    <ligand>
        <name>ATP</name>
        <dbReference type="ChEBI" id="CHEBI:30616"/>
    </ligand>
</feature>
<feature type="binding site" evidence="1">
    <location>
        <position position="131"/>
    </location>
    <ligand>
        <name>ATP</name>
        <dbReference type="ChEBI" id="CHEBI:30616"/>
    </ligand>
</feature>
<feature type="binding site" evidence="1">
    <location>
        <position position="131"/>
    </location>
    <ligand>
        <name>L-aspartate</name>
        <dbReference type="ChEBI" id="CHEBI:29991"/>
    </ligand>
</feature>
<feature type="binding site" evidence="1">
    <location>
        <position position="135"/>
    </location>
    <ligand>
        <name>L-aspartate</name>
        <dbReference type="ChEBI" id="CHEBI:29991"/>
    </ligand>
</feature>
<feature type="binding site" evidence="1">
    <location>
        <position position="135"/>
    </location>
    <ligand>
        <name>L-citrulline</name>
        <dbReference type="ChEBI" id="CHEBI:57743"/>
    </ligand>
</feature>
<feature type="binding site" evidence="1">
    <location>
        <position position="136"/>
    </location>
    <ligand>
        <name>ATP</name>
        <dbReference type="ChEBI" id="CHEBI:30616"/>
    </ligand>
</feature>
<feature type="binding site" evidence="1">
    <location>
        <position position="136"/>
    </location>
    <ligand>
        <name>L-aspartate</name>
        <dbReference type="ChEBI" id="CHEBI:29991"/>
    </ligand>
</feature>
<feature type="binding site" evidence="1">
    <location>
        <position position="139"/>
    </location>
    <ligand>
        <name>L-citrulline</name>
        <dbReference type="ChEBI" id="CHEBI:57743"/>
    </ligand>
</feature>
<feature type="binding site" evidence="1">
    <location>
        <position position="192"/>
    </location>
    <ligand>
        <name>L-citrulline</name>
        <dbReference type="ChEBI" id="CHEBI:57743"/>
    </ligand>
</feature>
<feature type="binding site" evidence="1">
    <location>
        <position position="194"/>
    </location>
    <ligand>
        <name>ATP</name>
        <dbReference type="ChEBI" id="CHEBI:30616"/>
    </ligand>
</feature>
<feature type="binding site" evidence="1">
    <location>
        <position position="201"/>
    </location>
    <ligand>
        <name>L-citrulline</name>
        <dbReference type="ChEBI" id="CHEBI:57743"/>
    </ligand>
</feature>
<feature type="binding site" evidence="1">
    <location>
        <position position="203"/>
    </location>
    <ligand>
        <name>L-citrulline</name>
        <dbReference type="ChEBI" id="CHEBI:57743"/>
    </ligand>
</feature>
<feature type="binding site" evidence="1">
    <location>
        <position position="280"/>
    </location>
    <ligand>
        <name>L-citrulline</name>
        <dbReference type="ChEBI" id="CHEBI:57743"/>
    </ligand>
</feature>
<evidence type="ECO:0000255" key="1">
    <source>
        <dbReference type="HAMAP-Rule" id="MF_00581"/>
    </source>
</evidence>
<comment type="catalytic activity">
    <reaction evidence="1">
        <text>L-citrulline + L-aspartate + ATP = 2-(N(omega)-L-arginino)succinate + AMP + diphosphate + H(+)</text>
        <dbReference type="Rhea" id="RHEA:10932"/>
        <dbReference type="ChEBI" id="CHEBI:15378"/>
        <dbReference type="ChEBI" id="CHEBI:29991"/>
        <dbReference type="ChEBI" id="CHEBI:30616"/>
        <dbReference type="ChEBI" id="CHEBI:33019"/>
        <dbReference type="ChEBI" id="CHEBI:57472"/>
        <dbReference type="ChEBI" id="CHEBI:57743"/>
        <dbReference type="ChEBI" id="CHEBI:456215"/>
        <dbReference type="EC" id="6.3.4.5"/>
    </reaction>
</comment>
<comment type="pathway">
    <text evidence="1">Amino-acid biosynthesis; L-arginine biosynthesis; L-arginine from L-ornithine and carbamoyl phosphate: step 2/3.</text>
</comment>
<comment type="subunit">
    <text evidence="1">Homotetramer.</text>
</comment>
<comment type="subcellular location">
    <subcellularLocation>
        <location evidence="1">Cytoplasm</location>
    </subcellularLocation>
</comment>
<comment type="similarity">
    <text evidence="1">Belongs to the argininosuccinate synthase family. Type 2 subfamily.</text>
</comment>
<reference key="1">
    <citation type="journal article" date="2006" name="Mol. Microbiol.">
        <title>Role of pathogenicity island-associated integrases in the genome plasticity of uropathogenic Escherichia coli strain 536.</title>
        <authorList>
            <person name="Hochhut B."/>
            <person name="Wilde C."/>
            <person name="Balling G."/>
            <person name="Middendorf B."/>
            <person name="Dobrindt U."/>
            <person name="Brzuszkiewicz E."/>
            <person name="Gottschalk G."/>
            <person name="Carniel E."/>
            <person name="Hacker J."/>
        </authorList>
    </citation>
    <scope>NUCLEOTIDE SEQUENCE [LARGE SCALE GENOMIC DNA]</scope>
    <source>
        <strain>536 / UPEC</strain>
    </source>
</reference>
<proteinExistence type="inferred from homology"/>
<organism>
    <name type="scientific">Escherichia coli O6:K15:H31 (strain 536 / UPEC)</name>
    <dbReference type="NCBI Taxonomy" id="362663"/>
    <lineage>
        <taxon>Bacteria</taxon>
        <taxon>Pseudomonadati</taxon>
        <taxon>Pseudomonadota</taxon>
        <taxon>Gammaproteobacteria</taxon>
        <taxon>Enterobacterales</taxon>
        <taxon>Enterobacteriaceae</taxon>
        <taxon>Escherichia</taxon>
    </lineage>
</organism>